<evidence type="ECO:0000255" key="1">
    <source>
        <dbReference type="HAMAP-Rule" id="MF_00191"/>
    </source>
</evidence>
<keyword id="KW-0004">4Fe-4S</keyword>
<keyword id="KW-0408">Iron</keyword>
<keyword id="KW-0411">Iron-sulfur</keyword>
<keyword id="KW-0414">Isoprene biosynthesis</keyword>
<keyword id="KW-0479">Metal-binding</keyword>
<keyword id="KW-0560">Oxidoreductase</keyword>
<protein>
    <recommendedName>
        <fullName evidence="1">4-hydroxy-3-methylbut-2-enyl diphosphate reductase</fullName>
        <shortName evidence="1">HMBPP reductase</shortName>
        <ecNumber evidence="1">1.17.7.4</ecNumber>
    </recommendedName>
</protein>
<reference key="1">
    <citation type="journal article" date="2005" name="J. Bacteriol.">
        <title>Insights into genome plasticity and pathogenicity of the plant pathogenic Bacterium Xanthomonas campestris pv. vesicatoria revealed by the complete genome sequence.</title>
        <authorList>
            <person name="Thieme F."/>
            <person name="Koebnik R."/>
            <person name="Bekel T."/>
            <person name="Berger C."/>
            <person name="Boch J."/>
            <person name="Buettner D."/>
            <person name="Caldana C."/>
            <person name="Gaigalat L."/>
            <person name="Goesmann A."/>
            <person name="Kay S."/>
            <person name="Kirchner O."/>
            <person name="Lanz C."/>
            <person name="Linke B."/>
            <person name="McHardy A.C."/>
            <person name="Meyer F."/>
            <person name="Mittenhuber G."/>
            <person name="Nies D.H."/>
            <person name="Niesbach-Kloesgen U."/>
            <person name="Patschkowski T."/>
            <person name="Rueckert C."/>
            <person name="Rupp O."/>
            <person name="Schneiker S."/>
            <person name="Schuster S.C."/>
            <person name="Vorhoelter F.J."/>
            <person name="Weber E."/>
            <person name="Puehler A."/>
            <person name="Bonas U."/>
            <person name="Bartels D."/>
            <person name="Kaiser O."/>
        </authorList>
    </citation>
    <scope>NUCLEOTIDE SEQUENCE [LARGE SCALE GENOMIC DNA]</scope>
    <source>
        <strain>85-10</strain>
    </source>
</reference>
<dbReference type="EC" id="1.17.7.4" evidence="1"/>
<dbReference type="EMBL" id="AM039952">
    <property type="protein sequence ID" value="CAJ22923.1"/>
    <property type="molecule type" value="Genomic_DNA"/>
</dbReference>
<dbReference type="SMR" id="Q3BW40"/>
<dbReference type="STRING" id="456327.BJD11_16155"/>
<dbReference type="KEGG" id="xcv:XCV1292"/>
<dbReference type="eggNOG" id="COG0761">
    <property type="taxonomic scope" value="Bacteria"/>
</dbReference>
<dbReference type="HOGENOM" id="CLU_027486_1_1_6"/>
<dbReference type="UniPathway" id="UPA00056">
    <property type="reaction ID" value="UER00097"/>
</dbReference>
<dbReference type="UniPathway" id="UPA00059">
    <property type="reaction ID" value="UER00105"/>
</dbReference>
<dbReference type="Proteomes" id="UP000007069">
    <property type="component" value="Chromosome"/>
</dbReference>
<dbReference type="GO" id="GO:0051539">
    <property type="term" value="F:4 iron, 4 sulfur cluster binding"/>
    <property type="evidence" value="ECO:0007669"/>
    <property type="project" value="UniProtKB-UniRule"/>
</dbReference>
<dbReference type="GO" id="GO:0051745">
    <property type="term" value="F:4-hydroxy-3-methylbut-2-enyl diphosphate reductase activity"/>
    <property type="evidence" value="ECO:0007669"/>
    <property type="project" value="UniProtKB-UniRule"/>
</dbReference>
<dbReference type="GO" id="GO:0046872">
    <property type="term" value="F:metal ion binding"/>
    <property type="evidence" value="ECO:0007669"/>
    <property type="project" value="UniProtKB-KW"/>
</dbReference>
<dbReference type="GO" id="GO:0050992">
    <property type="term" value="P:dimethylallyl diphosphate biosynthetic process"/>
    <property type="evidence" value="ECO:0007669"/>
    <property type="project" value="UniProtKB-UniRule"/>
</dbReference>
<dbReference type="GO" id="GO:0019288">
    <property type="term" value="P:isopentenyl diphosphate biosynthetic process, methylerythritol 4-phosphate pathway"/>
    <property type="evidence" value="ECO:0007669"/>
    <property type="project" value="UniProtKB-UniRule"/>
</dbReference>
<dbReference type="GO" id="GO:0016114">
    <property type="term" value="P:terpenoid biosynthetic process"/>
    <property type="evidence" value="ECO:0007669"/>
    <property type="project" value="UniProtKB-UniRule"/>
</dbReference>
<dbReference type="CDD" id="cd13944">
    <property type="entry name" value="lytB_ispH"/>
    <property type="match status" value="1"/>
</dbReference>
<dbReference type="Gene3D" id="3.40.50.11270">
    <property type="match status" value="1"/>
</dbReference>
<dbReference type="Gene3D" id="3.40.1010.20">
    <property type="entry name" value="4-hydroxy-3-methylbut-2-enyl diphosphate reductase, catalytic domain"/>
    <property type="match status" value="2"/>
</dbReference>
<dbReference type="HAMAP" id="MF_00191">
    <property type="entry name" value="IspH"/>
    <property type="match status" value="1"/>
</dbReference>
<dbReference type="InterPro" id="IPR003451">
    <property type="entry name" value="LytB/IspH"/>
</dbReference>
<dbReference type="NCBIfam" id="TIGR00216">
    <property type="entry name" value="ispH_lytB"/>
    <property type="match status" value="1"/>
</dbReference>
<dbReference type="NCBIfam" id="NF002188">
    <property type="entry name" value="PRK01045.1-2"/>
    <property type="match status" value="1"/>
</dbReference>
<dbReference type="NCBIfam" id="NF002190">
    <property type="entry name" value="PRK01045.1-4"/>
    <property type="match status" value="1"/>
</dbReference>
<dbReference type="PANTHER" id="PTHR30426">
    <property type="entry name" value="4-HYDROXY-3-METHYLBUT-2-ENYL DIPHOSPHATE REDUCTASE"/>
    <property type="match status" value="1"/>
</dbReference>
<dbReference type="PANTHER" id="PTHR30426:SF0">
    <property type="entry name" value="4-HYDROXY-3-METHYLBUT-2-ENYL DIPHOSPHATE REDUCTASE"/>
    <property type="match status" value="1"/>
</dbReference>
<dbReference type="Pfam" id="PF02401">
    <property type="entry name" value="LYTB"/>
    <property type="match status" value="1"/>
</dbReference>
<comment type="function">
    <text evidence="1">Catalyzes the conversion of 1-hydroxy-2-methyl-2-(E)-butenyl 4-diphosphate (HMBPP) into a mixture of isopentenyl diphosphate (IPP) and dimethylallyl diphosphate (DMAPP). Acts in the terminal step of the DOXP/MEP pathway for isoprenoid precursor biosynthesis.</text>
</comment>
<comment type="catalytic activity">
    <reaction evidence="1">
        <text>isopentenyl diphosphate + 2 oxidized [2Fe-2S]-[ferredoxin] + H2O = (2E)-4-hydroxy-3-methylbut-2-enyl diphosphate + 2 reduced [2Fe-2S]-[ferredoxin] + 2 H(+)</text>
        <dbReference type="Rhea" id="RHEA:24488"/>
        <dbReference type="Rhea" id="RHEA-COMP:10000"/>
        <dbReference type="Rhea" id="RHEA-COMP:10001"/>
        <dbReference type="ChEBI" id="CHEBI:15377"/>
        <dbReference type="ChEBI" id="CHEBI:15378"/>
        <dbReference type="ChEBI" id="CHEBI:33737"/>
        <dbReference type="ChEBI" id="CHEBI:33738"/>
        <dbReference type="ChEBI" id="CHEBI:128753"/>
        <dbReference type="ChEBI" id="CHEBI:128769"/>
        <dbReference type="EC" id="1.17.7.4"/>
    </reaction>
</comment>
<comment type="catalytic activity">
    <reaction evidence="1">
        <text>dimethylallyl diphosphate + 2 oxidized [2Fe-2S]-[ferredoxin] + H2O = (2E)-4-hydroxy-3-methylbut-2-enyl diphosphate + 2 reduced [2Fe-2S]-[ferredoxin] + 2 H(+)</text>
        <dbReference type="Rhea" id="RHEA:24825"/>
        <dbReference type="Rhea" id="RHEA-COMP:10000"/>
        <dbReference type="Rhea" id="RHEA-COMP:10001"/>
        <dbReference type="ChEBI" id="CHEBI:15377"/>
        <dbReference type="ChEBI" id="CHEBI:15378"/>
        <dbReference type="ChEBI" id="CHEBI:33737"/>
        <dbReference type="ChEBI" id="CHEBI:33738"/>
        <dbReference type="ChEBI" id="CHEBI:57623"/>
        <dbReference type="ChEBI" id="CHEBI:128753"/>
        <dbReference type="EC" id="1.17.7.4"/>
    </reaction>
</comment>
<comment type="cofactor">
    <cofactor evidence="1">
        <name>[4Fe-4S] cluster</name>
        <dbReference type="ChEBI" id="CHEBI:49883"/>
    </cofactor>
    <text evidence="1">Binds 1 [4Fe-4S] cluster per subunit.</text>
</comment>
<comment type="pathway">
    <text evidence="1">Isoprenoid biosynthesis; dimethylallyl diphosphate biosynthesis; dimethylallyl diphosphate from (2E)-4-hydroxy-3-methylbutenyl diphosphate: step 1/1.</text>
</comment>
<comment type="pathway">
    <text evidence="1">Isoprenoid biosynthesis; isopentenyl diphosphate biosynthesis via DXP pathway; isopentenyl diphosphate from 1-deoxy-D-xylulose 5-phosphate: step 6/6.</text>
</comment>
<comment type="similarity">
    <text evidence="1">Belongs to the IspH family.</text>
</comment>
<proteinExistence type="inferred from homology"/>
<name>ISPH_XANE5</name>
<gene>
    <name evidence="1" type="primary">ispH</name>
    <name type="ordered locus">XCV1292</name>
</gene>
<accession>Q3BW40</accession>
<organism>
    <name type="scientific">Xanthomonas euvesicatoria pv. vesicatoria (strain 85-10)</name>
    <name type="common">Xanthomonas campestris pv. vesicatoria</name>
    <dbReference type="NCBI Taxonomy" id="316273"/>
    <lineage>
        <taxon>Bacteria</taxon>
        <taxon>Pseudomonadati</taxon>
        <taxon>Pseudomonadota</taxon>
        <taxon>Gammaproteobacteria</taxon>
        <taxon>Lysobacterales</taxon>
        <taxon>Lysobacteraceae</taxon>
        <taxon>Xanthomonas</taxon>
    </lineage>
</organism>
<sequence>MPAMDVLLANPRGFCAGVDRAIEIVKRAIETLGAPIYVRHEVVHNRFVVDDLKQRGAIFVEELDEVPDDATVIFSAHGVSQAVRQEAERRGLRVFDATCPLVTKVHFEVARHCRAGRDVVLIGHAGHPEVEGTMGQWSRERGAGTIYLVEDIEQVATLDVRQPDNLAYTTQTTLSVDDTMGIIEALRARYPAMQGPRHDDICYATQNRQDAVRDLARQCDLVLVVGSPNSSNSNRLSELARRDGVESYLIDNASEIDPAWIVGKQHIGLTAGASAPQVLVDGVLARLRELGAAGVSELEGEPESMVFALPKELRLRLVS</sequence>
<feature type="chain" id="PRO_1000098988" description="4-hydroxy-3-methylbut-2-enyl diphosphate reductase">
    <location>
        <begin position="1"/>
        <end position="319"/>
    </location>
</feature>
<feature type="active site" description="Proton donor" evidence="1">
    <location>
        <position position="129"/>
    </location>
</feature>
<feature type="binding site" evidence="1">
    <location>
        <position position="15"/>
    </location>
    <ligand>
        <name>[4Fe-4S] cluster</name>
        <dbReference type="ChEBI" id="CHEBI:49883"/>
    </ligand>
</feature>
<feature type="binding site" evidence="1">
    <location>
        <position position="44"/>
    </location>
    <ligand>
        <name>(2E)-4-hydroxy-3-methylbut-2-enyl diphosphate</name>
        <dbReference type="ChEBI" id="CHEBI:128753"/>
    </ligand>
</feature>
<feature type="binding site" evidence="1">
    <location>
        <position position="44"/>
    </location>
    <ligand>
        <name>dimethylallyl diphosphate</name>
        <dbReference type="ChEBI" id="CHEBI:57623"/>
    </ligand>
</feature>
<feature type="binding site" evidence="1">
    <location>
        <position position="44"/>
    </location>
    <ligand>
        <name>isopentenyl diphosphate</name>
        <dbReference type="ChEBI" id="CHEBI:128769"/>
    </ligand>
</feature>
<feature type="binding site" evidence="1">
    <location>
        <position position="77"/>
    </location>
    <ligand>
        <name>(2E)-4-hydroxy-3-methylbut-2-enyl diphosphate</name>
        <dbReference type="ChEBI" id="CHEBI:128753"/>
    </ligand>
</feature>
<feature type="binding site" evidence="1">
    <location>
        <position position="77"/>
    </location>
    <ligand>
        <name>dimethylallyl diphosphate</name>
        <dbReference type="ChEBI" id="CHEBI:57623"/>
    </ligand>
</feature>
<feature type="binding site" evidence="1">
    <location>
        <position position="77"/>
    </location>
    <ligand>
        <name>isopentenyl diphosphate</name>
        <dbReference type="ChEBI" id="CHEBI:128769"/>
    </ligand>
</feature>
<feature type="binding site" evidence="1">
    <location>
        <position position="99"/>
    </location>
    <ligand>
        <name>[4Fe-4S] cluster</name>
        <dbReference type="ChEBI" id="CHEBI:49883"/>
    </ligand>
</feature>
<feature type="binding site" evidence="1">
    <location>
        <position position="127"/>
    </location>
    <ligand>
        <name>(2E)-4-hydroxy-3-methylbut-2-enyl diphosphate</name>
        <dbReference type="ChEBI" id="CHEBI:128753"/>
    </ligand>
</feature>
<feature type="binding site" evidence="1">
    <location>
        <position position="127"/>
    </location>
    <ligand>
        <name>dimethylallyl diphosphate</name>
        <dbReference type="ChEBI" id="CHEBI:57623"/>
    </ligand>
</feature>
<feature type="binding site" evidence="1">
    <location>
        <position position="127"/>
    </location>
    <ligand>
        <name>isopentenyl diphosphate</name>
        <dbReference type="ChEBI" id="CHEBI:128769"/>
    </ligand>
</feature>
<feature type="binding site" evidence="1">
    <location>
        <position position="172"/>
    </location>
    <ligand>
        <name>(2E)-4-hydroxy-3-methylbut-2-enyl diphosphate</name>
        <dbReference type="ChEBI" id="CHEBI:128753"/>
    </ligand>
</feature>
<feature type="binding site" evidence="1">
    <location>
        <position position="202"/>
    </location>
    <ligand>
        <name>[4Fe-4S] cluster</name>
        <dbReference type="ChEBI" id="CHEBI:49883"/>
    </ligand>
</feature>
<feature type="binding site" evidence="1">
    <location>
        <position position="230"/>
    </location>
    <ligand>
        <name>(2E)-4-hydroxy-3-methylbut-2-enyl diphosphate</name>
        <dbReference type="ChEBI" id="CHEBI:128753"/>
    </ligand>
</feature>
<feature type="binding site" evidence="1">
    <location>
        <position position="230"/>
    </location>
    <ligand>
        <name>dimethylallyl diphosphate</name>
        <dbReference type="ChEBI" id="CHEBI:57623"/>
    </ligand>
</feature>
<feature type="binding site" evidence="1">
    <location>
        <position position="230"/>
    </location>
    <ligand>
        <name>isopentenyl diphosphate</name>
        <dbReference type="ChEBI" id="CHEBI:128769"/>
    </ligand>
</feature>
<feature type="binding site" evidence="1">
    <location>
        <position position="231"/>
    </location>
    <ligand>
        <name>(2E)-4-hydroxy-3-methylbut-2-enyl diphosphate</name>
        <dbReference type="ChEBI" id="CHEBI:128753"/>
    </ligand>
</feature>
<feature type="binding site" evidence="1">
    <location>
        <position position="231"/>
    </location>
    <ligand>
        <name>dimethylallyl diphosphate</name>
        <dbReference type="ChEBI" id="CHEBI:57623"/>
    </ligand>
</feature>
<feature type="binding site" evidence="1">
    <location>
        <position position="231"/>
    </location>
    <ligand>
        <name>isopentenyl diphosphate</name>
        <dbReference type="ChEBI" id="CHEBI:128769"/>
    </ligand>
</feature>
<feature type="binding site" evidence="1">
    <location>
        <position position="232"/>
    </location>
    <ligand>
        <name>(2E)-4-hydroxy-3-methylbut-2-enyl diphosphate</name>
        <dbReference type="ChEBI" id="CHEBI:128753"/>
    </ligand>
</feature>
<feature type="binding site" evidence="1">
    <location>
        <position position="232"/>
    </location>
    <ligand>
        <name>dimethylallyl diphosphate</name>
        <dbReference type="ChEBI" id="CHEBI:57623"/>
    </ligand>
</feature>
<feature type="binding site" evidence="1">
    <location>
        <position position="232"/>
    </location>
    <ligand>
        <name>isopentenyl diphosphate</name>
        <dbReference type="ChEBI" id="CHEBI:128769"/>
    </ligand>
</feature>
<feature type="binding site" evidence="1">
    <location>
        <position position="274"/>
    </location>
    <ligand>
        <name>(2E)-4-hydroxy-3-methylbut-2-enyl diphosphate</name>
        <dbReference type="ChEBI" id="CHEBI:128753"/>
    </ligand>
</feature>
<feature type="binding site" evidence="1">
    <location>
        <position position="274"/>
    </location>
    <ligand>
        <name>dimethylallyl diphosphate</name>
        <dbReference type="ChEBI" id="CHEBI:57623"/>
    </ligand>
</feature>
<feature type="binding site" evidence="1">
    <location>
        <position position="274"/>
    </location>
    <ligand>
        <name>isopentenyl diphosphate</name>
        <dbReference type="ChEBI" id="CHEBI:128769"/>
    </ligand>
</feature>